<keyword id="KW-0067">ATP-binding</keyword>
<keyword id="KW-0963">Cytoplasm</keyword>
<keyword id="KW-1015">Disulfide bond</keyword>
<keyword id="KW-0547">Nucleotide-binding</keyword>
<keyword id="KW-1185">Reference proteome</keyword>
<keyword id="KW-0694">RNA-binding</keyword>
<keyword id="KW-0808">Transferase</keyword>
<keyword id="KW-0819">tRNA processing</keyword>
<keyword id="KW-0820">tRNA-binding</keyword>
<accession>A1WWV9</accession>
<proteinExistence type="inferred from homology"/>
<reference key="1">
    <citation type="submission" date="2006-12" db="EMBL/GenBank/DDBJ databases">
        <title>Complete sequence of Halorhodospira halophila SL1.</title>
        <authorList>
            <consortium name="US DOE Joint Genome Institute"/>
            <person name="Copeland A."/>
            <person name="Lucas S."/>
            <person name="Lapidus A."/>
            <person name="Barry K."/>
            <person name="Detter J.C."/>
            <person name="Glavina del Rio T."/>
            <person name="Hammon N."/>
            <person name="Israni S."/>
            <person name="Dalin E."/>
            <person name="Tice H."/>
            <person name="Pitluck S."/>
            <person name="Saunders E."/>
            <person name="Brettin T."/>
            <person name="Bruce D."/>
            <person name="Han C."/>
            <person name="Tapia R."/>
            <person name="Schmutz J."/>
            <person name="Larimer F."/>
            <person name="Land M."/>
            <person name="Hauser L."/>
            <person name="Kyrpides N."/>
            <person name="Mikhailova N."/>
            <person name="Hoff W."/>
            <person name="Richardson P."/>
        </authorList>
    </citation>
    <scope>NUCLEOTIDE SEQUENCE [LARGE SCALE GENOMIC DNA]</scope>
    <source>
        <strain>DSM 244 / SL1</strain>
    </source>
</reference>
<comment type="function">
    <text evidence="1">Catalyzes the 2-thiolation of uridine at the wobble position (U34) of tRNA, leading to the formation of s(2)U34.</text>
</comment>
<comment type="catalytic activity">
    <reaction evidence="1">
        <text>S-sulfanyl-L-cysteinyl-[protein] + uridine(34) in tRNA + AH2 + ATP = 2-thiouridine(34) in tRNA + L-cysteinyl-[protein] + A + AMP + diphosphate + H(+)</text>
        <dbReference type="Rhea" id="RHEA:47032"/>
        <dbReference type="Rhea" id="RHEA-COMP:10131"/>
        <dbReference type="Rhea" id="RHEA-COMP:11726"/>
        <dbReference type="Rhea" id="RHEA-COMP:11727"/>
        <dbReference type="Rhea" id="RHEA-COMP:11728"/>
        <dbReference type="ChEBI" id="CHEBI:13193"/>
        <dbReference type="ChEBI" id="CHEBI:15378"/>
        <dbReference type="ChEBI" id="CHEBI:17499"/>
        <dbReference type="ChEBI" id="CHEBI:29950"/>
        <dbReference type="ChEBI" id="CHEBI:30616"/>
        <dbReference type="ChEBI" id="CHEBI:33019"/>
        <dbReference type="ChEBI" id="CHEBI:61963"/>
        <dbReference type="ChEBI" id="CHEBI:65315"/>
        <dbReference type="ChEBI" id="CHEBI:87170"/>
        <dbReference type="ChEBI" id="CHEBI:456215"/>
        <dbReference type="EC" id="2.8.1.13"/>
    </reaction>
</comment>
<comment type="subcellular location">
    <subcellularLocation>
        <location evidence="1">Cytoplasm</location>
    </subcellularLocation>
</comment>
<comment type="similarity">
    <text evidence="1">Belongs to the MnmA/TRMU family.</text>
</comment>
<name>MNMA_HALHL</name>
<evidence type="ECO:0000255" key="1">
    <source>
        <dbReference type="HAMAP-Rule" id="MF_00144"/>
    </source>
</evidence>
<evidence type="ECO:0000256" key="2">
    <source>
        <dbReference type="SAM" id="MobiDB-lite"/>
    </source>
</evidence>
<gene>
    <name evidence="1" type="primary">mnmA</name>
    <name type="synonym">trmU</name>
    <name type="ordered locus">Hhal_1404</name>
</gene>
<sequence>MTESPKRIVVGLSGGVDSAVAALRLVRAGHEVIGLFMKNWEDDDTLTQCSAEDDIAAAVAVAEHLGIPIRRVNFAAHYRREVFEHALQELRAGRTPNPDILCNRHVKFDRFLRHAREQFEADAVATGHYARTGRAGDGEPALLRGIDPSKDQSYFLAGVPRQALDAVRFPLGDSTKETVRAEARSAALPNFDRPDSTGICFIGERDFTQFMQRYIDPHPGPILTEDGREIGRHCGLAFYTLGQRRGLGIGGDRNRDSSAPWYVAGKDARRNALFVVQGHDHPWLQSAAVSTEPFHWLAPVPAEGARLHAQVRYRQEPQAGQLSHAEGGRVVFRFDEPQRAATPGQHLVLYDREQCLGGGVIDTAHPADRSAPPALQTQSTEVV</sequence>
<protein>
    <recommendedName>
        <fullName evidence="1">tRNA-specific 2-thiouridylase MnmA</fullName>
        <ecNumber evidence="1">2.8.1.13</ecNumber>
    </recommendedName>
</protein>
<feature type="chain" id="PRO_1000009529" description="tRNA-specific 2-thiouridylase MnmA">
    <location>
        <begin position="1"/>
        <end position="383"/>
    </location>
</feature>
<feature type="region of interest" description="Interaction with target base in tRNA" evidence="1">
    <location>
        <begin position="97"/>
        <end position="99"/>
    </location>
</feature>
<feature type="region of interest" description="Interaction with tRNA" evidence="1">
    <location>
        <begin position="150"/>
        <end position="152"/>
    </location>
</feature>
<feature type="region of interest" description="Interaction with tRNA" evidence="1">
    <location>
        <begin position="312"/>
        <end position="313"/>
    </location>
</feature>
<feature type="region of interest" description="Disordered" evidence="2">
    <location>
        <begin position="361"/>
        <end position="383"/>
    </location>
</feature>
<feature type="active site" description="Nucleophile" evidence="1">
    <location>
        <position position="102"/>
    </location>
</feature>
<feature type="active site" description="Cysteine persulfide intermediate" evidence="1">
    <location>
        <position position="200"/>
    </location>
</feature>
<feature type="binding site" evidence="1">
    <location>
        <begin position="11"/>
        <end position="18"/>
    </location>
    <ligand>
        <name>ATP</name>
        <dbReference type="ChEBI" id="CHEBI:30616"/>
    </ligand>
</feature>
<feature type="binding site" evidence="1">
    <location>
        <position position="37"/>
    </location>
    <ligand>
        <name>ATP</name>
        <dbReference type="ChEBI" id="CHEBI:30616"/>
    </ligand>
</feature>
<feature type="binding site" evidence="1">
    <location>
        <position position="127"/>
    </location>
    <ligand>
        <name>ATP</name>
        <dbReference type="ChEBI" id="CHEBI:30616"/>
    </ligand>
</feature>
<feature type="site" description="Interaction with tRNA" evidence="1">
    <location>
        <position position="128"/>
    </location>
</feature>
<feature type="site" description="Interaction with tRNA" evidence="1">
    <location>
        <position position="345"/>
    </location>
</feature>
<feature type="disulfide bond" description="Alternate" evidence="1">
    <location>
        <begin position="102"/>
        <end position="200"/>
    </location>
</feature>
<dbReference type="EC" id="2.8.1.13" evidence="1"/>
<dbReference type="EMBL" id="CP000544">
    <property type="protein sequence ID" value="ABM62171.1"/>
    <property type="molecule type" value="Genomic_DNA"/>
</dbReference>
<dbReference type="RefSeq" id="WP_011814193.1">
    <property type="nucleotide sequence ID" value="NC_008789.1"/>
</dbReference>
<dbReference type="SMR" id="A1WWV9"/>
<dbReference type="STRING" id="349124.Hhal_1404"/>
<dbReference type="KEGG" id="hha:Hhal_1404"/>
<dbReference type="eggNOG" id="COG0482">
    <property type="taxonomic scope" value="Bacteria"/>
</dbReference>
<dbReference type="HOGENOM" id="CLU_035188_1_0_6"/>
<dbReference type="OrthoDB" id="9800696at2"/>
<dbReference type="Proteomes" id="UP000000647">
    <property type="component" value="Chromosome"/>
</dbReference>
<dbReference type="GO" id="GO:0005737">
    <property type="term" value="C:cytoplasm"/>
    <property type="evidence" value="ECO:0007669"/>
    <property type="project" value="UniProtKB-SubCell"/>
</dbReference>
<dbReference type="GO" id="GO:0005524">
    <property type="term" value="F:ATP binding"/>
    <property type="evidence" value="ECO:0007669"/>
    <property type="project" value="UniProtKB-KW"/>
</dbReference>
<dbReference type="GO" id="GO:0000049">
    <property type="term" value="F:tRNA binding"/>
    <property type="evidence" value="ECO:0007669"/>
    <property type="project" value="UniProtKB-KW"/>
</dbReference>
<dbReference type="GO" id="GO:0103016">
    <property type="term" value="F:tRNA-uridine 2-sulfurtransferase activity"/>
    <property type="evidence" value="ECO:0007669"/>
    <property type="project" value="UniProtKB-EC"/>
</dbReference>
<dbReference type="GO" id="GO:0002143">
    <property type="term" value="P:tRNA wobble position uridine thiolation"/>
    <property type="evidence" value="ECO:0007669"/>
    <property type="project" value="TreeGrafter"/>
</dbReference>
<dbReference type="CDD" id="cd01998">
    <property type="entry name" value="MnmA_TRMU-like"/>
    <property type="match status" value="1"/>
</dbReference>
<dbReference type="FunFam" id="2.30.30.280:FF:000001">
    <property type="entry name" value="tRNA-specific 2-thiouridylase MnmA"/>
    <property type="match status" value="1"/>
</dbReference>
<dbReference type="Gene3D" id="2.30.30.280">
    <property type="entry name" value="Adenine nucleotide alpha hydrolases-like domains"/>
    <property type="match status" value="1"/>
</dbReference>
<dbReference type="Gene3D" id="3.40.50.620">
    <property type="entry name" value="HUPs"/>
    <property type="match status" value="1"/>
</dbReference>
<dbReference type="Gene3D" id="2.40.30.10">
    <property type="entry name" value="Translation factors"/>
    <property type="match status" value="1"/>
</dbReference>
<dbReference type="HAMAP" id="MF_00144">
    <property type="entry name" value="tRNA_thiouridyl_MnmA"/>
    <property type="match status" value="1"/>
</dbReference>
<dbReference type="InterPro" id="IPR004506">
    <property type="entry name" value="MnmA-like"/>
</dbReference>
<dbReference type="InterPro" id="IPR046885">
    <property type="entry name" value="MnmA-like_C"/>
</dbReference>
<dbReference type="InterPro" id="IPR046884">
    <property type="entry name" value="MnmA-like_central"/>
</dbReference>
<dbReference type="InterPro" id="IPR023382">
    <property type="entry name" value="MnmA-like_central_sf"/>
</dbReference>
<dbReference type="InterPro" id="IPR014729">
    <property type="entry name" value="Rossmann-like_a/b/a_fold"/>
</dbReference>
<dbReference type="NCBIfam" id="NF001138">
    <property type="entry name" value="PRK00143.1"/>
    <property type="match status" value="1"/>
</dbReference>
<dbReference type="NCBIfam" id="TIGR00420">
    <property type="entry name" value="trmU"/>
    <property type="match status" value="1"/>
</dbReference>
<dbReference type="PANTHER" id="PTHR11933:SF5">
    <property type="entry name" value="MITOCHONDRIAL TRNA-SPECIFIC 2-THIOURIDYLASE 1"/>
    <property type="match status" value="1"/>
</dbReference>
<dbReference type="PANTHER" id="PTHR11933">
    <property type="entry name" value="TRNA 5-METHYLAMINOMETHYL-2-THIOURIDYLATE -METHYLTRANSFERASE"/>
    <property type="match status" value="1"/>
</dbReference>
<dbReference type="Pfam" id="PF03054">
    <property type="entry name" value="tRNA_Me_trans"/>
    <property type="match status" value="1"/>
</dbReference>
<dbReference type="Pfam" id="PF20258">
    <property type="entry name" value="tRNA_Me_trans_C"/>
    <property type="match status" value="1"/>
</dbReference>
<dbReference type="Pfam" id="PF20259">
    <property type="entry name" value="tRNA_Me_trans_M"/>
    <property type="match status" value="1"/>
</dbReference>
<dbReference type="SUPFAM" id="SSF52402">
    <property type="entry name" value="Adenine nucleotide alpha hydrolases-like"/>
    <property type="match status" value="1"/>
</dbReference>
<organism>
    <name type="scientific">Halorhodospira halophila (strain DSM 244 / SL1)</name>
    <name type="common">Ectothiorhodospira halophila (strain DSM 244 / SL1)</name>
    <dbReference type="NCBI Taxonomy" id="349124"/>
    <lineage>
        <taxon>Bacteria</taxon>
        <taxon>Pseudomonadati</taxon>
        <taxon>Pseudomonadota</taxon>
        <taxon>Gammaproteobacteria</taxon>
        <taxon>Chromatiales</taxon>
        <taxon>Ectothiorhodospiraceae</taxon>
        <taxon>Halorhodospira</taxon>
    </lineage>
</organism>